<reference key="1">
    <citation type="journal article" date="2008" name="Genome Res.">
        <title>The genome of Pelotomaculum thermopropionicum reveals niche-associated evolution in anaerobic microbiota.</title>
        <authorList>
            <person name="Kosaka T."/>
            <person name="Kato S."/>
            <person name="Shimoyama T."/>
            <person name="Ishii S."/>
            <person name="Abe T."/>
            <person name="Watanabe K."/>
        </authorList>
    </citation>
    <scope>NUCLEOTIDE SEQUENCE [LARGE SCALE GENOMIC DNA]</scope>
    <source>
        <strain>DSM 13744 / JCM 10971 / SI</strain>
    </source>
</reference>
<name>RS7_PELTS</name>
<feature type="chain" id="PRO_1000081291" description="Small ribosomal subunit protein uS7">
    <location>
        <begin position="1"/>
        <end position="156"/>
    </location>
</feature>
<organism>
    <name type="scientific">Pelotomaculum thermopropionicum (strain DSM 13744 / JCM 10971 / SI)</name>
    <dbReference type="NCBI Taxonomy" id="370438"/>
    <lineage>
        <taxon>Bacteria</taxon>
        <taxon>Bacillati</taxon>
        <taxon>Bacillota</taxon>
        <taxon>Clostridia</taxon>
        <taxon>Eubacteriales</taxon>
        <taxon>Desulfotomaculaceae</taxon>
        <taxon>Pelotomaculum</taxon>
    </lineage>
</organism>
<dbReference type="EMBL" id="AP009389">
    <property type="protein sequence ID" value="BAF58497.1"/>
    <property type="molecule type" value="Genomic_DNA"/>
</dbReference>
<dbReference type="SMR" id="A5D5I6"/>
<dbReference type="STRING" id="370438.PTH_0316"/>
<dbReference type="KEGG" id="pth:PTH_0316"/>
<dbReference type="eggNOG" id="COG0049">
    <property type="taxonomic scope" value="Bacteria"/>
</dbReference>
<dbReference type="HOGENOM" id="CLU_072226_1_1_9"/>
<dbReference type="Proteomes" id="UP000006556">
    <property type="component" value="Chromosome"/>
</dbReference>
<dbReference type="GO" id="GO:0015935">
    <property type="term" value="C:small ribosomal subunit"/>
    <property type="evidence" value="ECO:0007669"/>
    <property type="project" value="InterPro"/>
</dbReference>
<dbReference type="GO" id="GO:0019843">
    <property type="term" value="F:rRNA binding"/>
    <property type="evidence" value="ECO:0007669"/>
    <property type="project" value="UniProtKB-UniRule"/>
</dbReference>
<dbReference type="GO" id="GO:0003735">
    <property type="term" value="F:structural constituent of ribosome"/>
    <property type="evidence" value="ECO:0007669"/>
    <property type="project" value="InterPro"/>
</dbReference>
<dbReference type="GO" id="GO:0000049">
    <property type="term" value="F:tRNA binding"/>
    <property type="evidence" value="ECO:0007669"/>
    <property type="project" value="UniProtKB-UniRule"/>
</dbReference>
<dbReference type="GO" id="GO:0006412">
    <property type="term" value="P:translation"/>
    <property type="evidence" value="ECO:0007669"/>
    <property type="project" value="UniProtKB-UniRule"/>
</dbReference>
<dbReference type="CDD" id="cd14869">
    <property type="entry name" value="uS7_Bacteria"/>
    <property type="match status" value="1"/>
</dbReference>
<dbReference type="FunFam" id="1.10.455.10:FF:000001">
    <property type="entry name" value="30S ribosomal protein S7"/>
    <property type="match status" value="1"/>
</dbReference>
<dbReference type="Gene3D" id="1.10.455.10">
    <property type="entry name" value="Ribosomal protein S7 domain"/>
    <property type="match status" value="1"/>
</dbReference>
<dbReference type="HAMAP" id="MF_00480_B">
    <property type="entry name" value="Ribosomal_uS7_B"/>
    <property type="match status" value="1"/>
</dbReference>
<dbReference type="InterPro" id="IPR000235">
    <property type="entry name" value="Ribosomal_uS7"/>
</dbReference>
<dbReference type="InterPro" id="IPR005717">
    <property type="entry name" value="Ribosomal_uS7_bac/org-type"/>
</dbReference>
<dbReference type="InterPro" id="IPR020606">
    <property type="entry name" value="Ribosomal_uS7_CS"/>
</dbReference>
<dbReference type="InterPro" id="IPR023798">
    <property type="entry name" value="Ribosomal_uS7_dom"/>
</dbReference>
<dbReference type="InterPro" id="IPR036823">
    <property type="entry name" value="Ribosomal_uS7_dom_sf"/>
</dbReference>
<dbReference type="NCBIfam" id="TIGR01029">
    <property type="entry name" value="rpsG_bact"/>
    <property type="match status" value="1"/>
</dbReference>
<dbReference type="PANTHER" id="PTHR11205">
    <property type="entry name" value="RIBOSOMAL PROTEIN S7"/>
    <property type="match status" value="1"/>
</dbReference>
<dbReference type="Pfam" id="PF00177">
    <property type="entry name" value="Ribosomal_S7"/>
    <property type="match status" value="1"/>
</dbReference>
<dbReference type="PIRSF" id="PIRSF002122">
    <property type="entry name" value="RPS7p_RPS7a_RPS5e_RPS7o"/>
    <property type="match status" value="1"/>
</dbReference>
<dbReference type="SUPFAM" id="SSF47973">
    <property type="entry name" value="Ribosomal protein S7"/>
    <property type="match status" value="1"/>
</dbReference>
<dbReference type="PROSITE" id="PS00052">
    <property type="entry name" value="RIBOSOMAL_S7"/>
    <property type="match status" value="1"/>
</dbReference>
<accession>A5D5I6</accession>
<comment type="function">
    <text evidence="1">One of the primary rRNA binding proteins, it binds directly to 16S rRNA where it nucleates assembly of the head domain of the 30S subunit. Is located at the subunit interface close to the decoding center, probably blocks exit of the E-site tRNA.</text>
</comment>
<comment type="subunit">
    <text evidence="1">Part of the 30S ribosomal subunit. Contacts proteins S9 and S11.</text>
</comment>
<comment type="similarity">
    <text evidence="1">Belongs to the universal ribosomal protein uS7 family.</text>
</comment>
<protein>
    <recommendedName>
        <fullName evidence="1">Small ribosomal subunit protein uS7</fullName>
    </recommendedName>
    <alternativeName>
        <fullName evidence="2">30S ribosomal protein S7</fullName>
    </alternativeName>
</protein>
<evidence type="ECO:0000255" key="1">
    <source>
        <dbReference type="HAMAP-Rule" id="MF_00480"/>
    </source>
</evidence>
<evidence type="ECO:0000305" key="2"/>
<keyword id="KW-1185">Reference proteome</keyword>
<keyword id="KW-0687">Ribonucleoprotein</keyword>
<keyword id="KW-0689">Ribosomal protein</keyword>
<keyword id="KW-0694">RNA-binding</keyword>
<keyword id="KW-0699">rRNA-binding</keyword>
<keyword id="KW-0820">tRNA-binding</keyword>
<gene>
    <name evidence="1" type="primary">rpsG</name>
    <name type="ordered locus">PTH_0316</name>
</gene>
<sequence>MPRRGAVPKREVLPDPVYQSKVLTKLINQVMLKGKKSLAESIVYGAMDIIKEKTGKNPLEVFETAMKNVMPVLEVKARRVGGANYQVPVEVRHDRRQTLAIRWLTNYARERAGKSMKEKLANEIMDAAAGTGGAVKKKEDTHKMAEANKAFAHYRW</sequence>
<proteinExistence type="inferred from homology"/>